<proteinExistence type="inferred from homology"/>
<accession>C3P9Q0</accession>
<gene>
    <name evidence="2" type="primary">rpsL</name>
    <name type="ordered locus">BAA_0121</name>
</gene>
<organism>
    <name type="scientific">Bacillus anthracis (strain A0248)</name>
    <dbReference type="NCBI Taxonomy" id="592021"/>
    <lineage>
        <taxon>Bacteria</taxon>
        <taxon>Bacillati</taxon>
        <taxon>Bacillota</taxon>
        <taxon>Bacilli</taxon>
        <taxon>Bacillales</taxon>
        <taxon>Bacillaceae</taxon>
        <taxon>Bacillus</taxon>
        <taxon>Bacillus cereus group</taxon>
    </lineage>
</organism>
<name>RS12_BACAA</name>
<evidence type="ECO:0000250" key="1"/>
<evidence type="ECO:0000255" key="2">
    <source>
        <dbReference type="HAMAP-Rule" id="MF_00403"/>
    </source>
</evidence>
<evidence type="ECO:0000305" key="3"/>
<feature type="chain" id="PRO_1000194120" description="Small ribosomal subunit protein uS12">
    <location>
        <begin position="1"/>
        <end position="140"/>
    </location>
</feature>
<feature type="modified residue" description="3-methylthioaspartic acid" evidence="1">
    <location>
        <position position="102"/>
    </location>
</feature>
<sequence length="140" mass="15446">MPTINQLVRNGRTDKVWKSKSPALNKGFNSLKKKSTDISAPQKRGVCTRVGTMTPKKPNSALRKYARVRLTNGIEVTAYIPGIGHNLQEHSVVLIRGGRVKDLPGVRYHIVRGALDTAGVDKRMQGRSKYGTKKPKAAKK</sequence>
<comment type="function">
    <text evidence="2">With S4 and S5 plays an important role in translational accuracy.</text>
</comment>
<comment type="function">
    <text evidence="2">Interacts with and stabilizes bases of the 16S rRNA that are involved in tRNA selection in the A site and with the mRNA backbone. Located at the interface of the 30S and 50S subunits, it traverses the body of the 30S subunit contacting proteins on the other side and probably holding the rRNA structure together. The combined cluster of proteins S8, S12 and S17 appears to hold together the shoulder and platform of the 30S subunit.</text>
</comment>
<comment type="subunit">
    <text evidence="2">Part of the 30S ribosomal subunit. Contacts proteins S8 and S17. May interact with IF1 in the 30S initiation complex.</text>
</comment>
<comment type="similarity">
    <text evidence="2">Belongs to the universal ribosomal protein uS12 family.</text>
</comment>
<protein>
    <recommendedName>
        <fullName evidence="2">Small ribosomal subunit protein uS12</fullName>
    </recommendedName>
    <alternativeName>
        <fullName evidence="3">30S ribosomal protein S12</fullName>
    </alternativeName>
</protein>
<dbReference type="EMBL" id="CP001598">
    <property type="protein sequence ID" value="ACQ48379.1"/>
    <property type="molecule type" value="Genomic_DNA"/>
</dbReference>
<dbReference type="RefSeq" id="WP_001142340.1">
    <property type="nucleotide sequence ID" value="NC_012659.1"/>
</dbReference>
<dbReference type="SMR" id="C3P9Q0"/>
<dbReference type="GeneID" id="93010948"/>
<dbReference type="KEGG" id="bai:BAA_0121"/>
<dbReference type="HOGENOM" id="CLU_104295_1_2_9"/>
<dbReference type="GO" id="GO:0015935">
    <property type="term" value="C:small ribosomal subunit"/>
    <property type="evidence" value="ECO:0007669"/>
    <property type="project" value="InterPro"/>
</dbReference>
<dbReference type="GO" id="GO:0019843">
    <property type="term" value="F:rRNA binding"/>
    <property type="evidence" value="ECO:0007669"/>
    <property type="project" value="UniProtKB-UniRule"/>
</dbReference>
<dbReference type="GO" id="GO:0003735">
    <property type="term" value="F:structural constituent of ribosome"/>
    <property type="evidence" value="ECO:0007669"/>
    <property type="project" value="InterPro"/>
</dbReference>
<dbReference type="GO" id="GO:0000049">
    <property type="term" value="F:tRNA binding"/>
    <property type="evidence" value="ECO:0007669"/>
    <property type="project" value="UniProtKB-UniRule"/>
</dbReference>
<dbReference type="GO" id="GO:0006412">
    <property type="term" value="P:translation"/>
    <property type="evidence" value="ECO:0007669"/>
    <property type="project" value="UniProtKB-UniRule"/>
</dbReference>
<dbReference type="CDD" id="cd03368">
    <property type="entry name" value="Ribosomal_S12"/>
    <property type="match status" value="1"/>
</dbReference>
<dbReference type="FunFam" id="2.40.50.140:FF:000001">
    <property type="entry name" value="30S ribosomal protein S12"/>
    <property type="match status" value="1"/>
</dbReference>
<dbReference type="Gene3D" id="2.40.50.140">
    <property type="entry name" value="Nucleic acid-binding proteins"/>
    <property type="match status" value="1"/>
</dbReference>
<dbReference type="HAMAP" id="MF_00403_B">
    <property type="entry name" value="Ribosomal_uS12_B"/>
    <property type="match status" value="1"/>
</dbReference>
<dbReference type="InterPro" id="IPR012340">
    <property type="entry name" value="NA-bd_OB-fold"/>
</dbReference>
<dbReference type="InterPro" id="IPR006032">
    <property type="entry name" value="Ribosomal_uS12"/>
</dbReference>
<dbReference type="InterPro" id="IPR005679">
    <property type="entry name" value="Ribosomal_uS12_bac"/>
</dbReference>
<dbReference type="NCBIfam" id="TIGR00981">
    <property type="entry name" value="rpsL_bact"/>
    <property type="match status" value="1"/>
</dbReference>
<dbReference type="PANTHER" id="PTHR11652">
    <property type="entry name" value="30S RIBOSOMAL PROTEIN S12 FAMILY MEMBER"/>
    <property type="match status" value="1"/>
</dbReference>
<dbReference type="Pfam" id="PF00164">
    <property type="entry name" value="Ribosom_S12_S23"/>
    <property type="match status" value="1"/>
</dbReference>
<dbReference type="PRINTS" id="PR01034">
    <property type="entry name" value="RIBOSOMALS12"/>
</dbReference>
<dbReference type="SUPFAM" id="SSF50249">
    <property type="entry name" value="Nucleic acid-binding proteins"/>
    <property type="match status" value="1"/>
</dbReference>
<dbReference type="PROSITE" id="PS00055">
    <property type="entry name" value="RIBOSOMAL_S12"/>
    <property type="match status" value="1"/>
</dbReference>
<reference key="1">
    <citation type="submission" date="2009-04" db="EMBL/GenBank/DDBJ databases">
        <title>Genome sequence of Bacillus anthracis A0248.</title>
        <authorList>
            <person name="Dodson R.J."/>
            <person name="Munk A.C."/>
            <person name="Bruce D."/>
            <person name="Detter C."/>
            <person name="Tapia R."/>
            <person name="Sutton G."/>
            <person name="Sims D."/>
            <person name="Brettin T."/>
        </authorList>
    </citation>
    <scope>NUCLEOTIDE SEQUENCE [LARGE SCALE GENOMIC DNA]</scope>
    <source>
        <strain>A0248</strain>
    </source>
</reference>
<keyword id="KW-0488">Methylation</keyword>
<keyword id="KW-0687">Ribonucleoprotein</keyword>
<keyword id="KW-0689">Ribosomal protein</keyword>
<keyword id="KW-0694">RNA-binding</keyword>
<keyword id="KW-0699">rRNA-binding</keyword>
<keyword id="KW-0820">tRNA-binding</keyword>